<gene>
    <name evidence="6" type="primary">MYMK</name>
    <name evidence="6" type="synonym">TMEM226</name>
    <name evidence="6" type="synonym">TMEM8C</name>
</gene>
<dbReference type="EMBL" id="BX324209">
    <property type="status" value="NOT_ANNOTATED_CDS"/>
    <property type="molecule type" value="Genomic_DNA"/>
</dbReference>
<dbReference type="CCDS" id="CCDS35170.1"/>
<dbReference type="RefSeq" id="NP_001073952.1">
    <property type="nucleotide sequence ID" value="NM_001080483.3"/>
</dbReference>
<dbReference type="SMR" id="A6NI61"/>
<dbReference type="FunCoup" id="A6NI61">
    <property type="interactions" value="215"/>
</dbReference>
<dbReference type="STRING" id="9606.ENSP00000419712"/>
<dbReference type="TCDB" id="1.N.2.1.1">
    <property type="family name" value="the myoblast fusion complex (mfc) family"/>
</dbReference>
<dbReference type="GlyGen" id="A6NI61">
    <property type="glycosylation" value="1 site"/>
</dbReference>
<dbReference type="iPTMnet" id="A6NI61"/>
<dbReference type="PhosphoSitePlus" id="A6NI61"/>
<dbReference type="BioMuta" id="MYMK"/>
<dbReference type="PaxDb" id="9606-ENSP00000419712"/>
<dbReference type="PeptideAtlas" id="A6NI61"/>
<dbReference type="Antibodypedia" id="67468">
    <property type="antibodies" value="10 antibodies from 6 providers"/>
</dbReference>
<dbReference type="DNASU" id="389827"/>
<dbReference type="Ensembl" id="ENST00000339996.4">
    <property type="protein sequence ID" value="ENSP00000419712.2"/>
    <property type="gene ID" value="ENSG00000187616.5"/>
</dbReference>
<dbReference type="GeneID" id="389827"/>
<dbReference type="KEGG" id="hsa:389827"/>
<dbReference type="MANE-Select" id="ENST00000339996.4">
    <property type="protein sequence ID" value="ENSP00000419712.2"/>
    <property type="RefSeq nucleotide sequence ID" value="NM_001080483.3"/>
    <property type="RefSeq protein sequence ID" value="NP_001073952.1"/>
</dbReference>
<dbReference type="UCSC" id="uc011mdk.2">
    <property type="organism name" value="human"/>
</dbReference>
<dbReference type="AGR" id="HGNC:33778"/>
<dbReference type="CTD" id="389827"/>
<dbReference type="DisGeNET" id="389827"/>
<dbReference type="GeneCards" id="MYMK"/>
<dbReference type="HGNC" id="HGNC:33778">
    <property type="gene designation" value="MYMK"/>
</dbReference>
<dbReference type="HPA" id="ENSG00000187616">
    <property type="expression patterns" value="Not detected"/>
</dbReference>
<dbReference type="MalaCards" id="MYMK"/>
<dbReference type="MIM" id="254940">
    <property type="type" value="phenotype"/>
</dbReference>
<dbReference type="MIM" id="615345">
    <property type="type" value="gene"/>
</dbReference>
<dbReference type="neXtProt" id="NX_A6NI61"/>
<dbReference type="OpenTargets" id="ENSG00000187616"/>
<dbReference type="Orphanet" id="1358">
    <property type="disease" value="Carey-Fineman-Ziter syndrome"/>
</dbReference>
<dbReference type="PharmGKB" id="PA165586306"/>
<dbReference type="VEuPathDB" id="HostDB:ENSG00000187616"/>
<dbReference type="eggNOG" id="ENOG502REE6">
    <property type="taxonomic scope" value="Eukaryota"/>
</dbReference>
<dbReference type="GeneTree" id="ENSGT00940000160710"/>
<dbReference type="HOGENOM" id="CLU_084233_0_0_1"/>
<dbReference type="InParanoid" id="A6NI61"/>
<dbReference type="OMA" id="HHACSGP"/>
<dbReference type="PAN-GO" id="A6NI61">
    <property type="GO annotations" value="2 GO annotations based on evolutionary models"/>
</dbReference>
<dbReference type="PhylomeDB" id="A6NI61"/>
<dbReference type="PathwayCommons" id="A6NI61"/>
<dbReference type="SignaLink" id="A6NI61"/>
<dbReference type="BioGRID-ORCS" id="389827">
    <property type="hits" value="22 hits in 1144 CRISPR screens"/>
</dbReference>
<dbReference type="GenomeRNAi" id="389827"/>
<dbReference type="Pharos" id="A6NI61">
    <property type="development level" value="Tdark"/>
</dbReference>
<dbReference type="PRO" id="PR:A6NI61"/>
<dbReference type="Proteomes" id="UP000005640">
    <property type="component" value="Chromosome 9"/>
</dbReference>
<dbReference type="RNAct" id="A6NI61">
    <property type="molecule type" value="protein"/>
</dbReference>
<dbReference type="Bgee" id="ENSG00000187616">
    <property type="expression patterns" value="Expressed in tibial nerve and 55 other cell types or tissues"/>
</dbReference>
<dbReference type="GO" id="GO:0000139">
    <property type="term" value="C:Golgi membrane"/>
    <property type="evidence" value="ECO:0000250"/>
    <property type="project" value="UniProtKB"/>
</dbReference>
<dbReference type="GO" id="GO:0005886">
    <property type="term" value="C:plasma membrane"/>
    <property type="evidence" value="ECO:0000314"/>
    <property type="project" value="UniProtKB"/>
</dbReference>
<dbReference type="GO" id="GO:0007517">
    <property type="term" value="P:muscle organ development"/>
    <property type="evidence" value="ECO:0007669"/>
    <property type="project" value="UniProtKB-KW"/>
</dbReference>
<dbReference type="GO" id="GO:0007520">
    <property type="term" value="P:myoblast fusion"/>
    <property type="evidence" value="ECO:0000314"/>
    <property type="project" value="UniProtKB"/>
</dbReference>
<dbReference type="GO" id="GO:0014905">
    <property type="term" value="P:myoblast fusion involved in skeletal muscle regeneration"/>
    <property type="evidence" value="ECO:0007669"/>
    <property type="project" value="Ensembl"/>
</dbReference>
<dbReference type="GO" id="GO:0045026">
    <property type="term" value="P:plasma membrane fusion"/>
    <property type="evidence" value="ECO:0000250"/>
    <property type="project" value="UniProtKB"/>
</dbReference>
<dbReference type="GO" id="GO:1904206">
    <property type="term" value="P:positive regulation of skeletal muscle hypertrophy"/>
    <property type="evidence" value="ECO:0000250"/>
    <property type="project" value="UniProtKB"/>
</dbReference>
<dbReference type="InterPro" id="IPR021910">
    <property type="entry name" value="NGX6/PGAP6/MYMK"/>
</dbReference>
<dbReference type="PANTHER" id="PTHR14319">
    <property type="entry name" value="FIVE-SPAN TRANSMEMBRANE PROTEIN M83"/>
    <property type="match status" value="1"/>
</dbReference>
<dbReference type="PANTHER" id="PTHR14319:SF7">
    <property type="entry name" value="POST-GPI ATTACHMENT TO PROTEINS FACTOR 6"/>
    <property type="match status" value="1"/>
</dbReference>
<dbReference type="Pfam" id="PF12036">
    <property type="entry name" value="DUF3522"/>
    <property type="match status" value="1"/>
</dbReference>
<feature type="chain" id="PRO_0000319062" description="Protein myomaker">
    <location>
        <begin position="1"/>
        <end position="221"/>
    </location>
</feature>
<feature type="topological domain" description="Extracellular" evidence="5">
    <location>
        <begin position="1"/>
        <end position="3"/>
    </location>
</feature>
<feature type="transmembrane region" description="Helical" evidence="2">
    <location>
        <begin position="4"/>
        <end position="24"/>
    </location>
</feature>
<feature type="topological domain" description="Cytoplasmic" evidence="5">
    <location>
        <begin position="25"/>
        <end position="34"/>
    </location>
</feature>
<feature type="transmembrane region" description="Helical" evidence="2">
    <location>
        <begin position="35"/>
        <end position="55"/>
    </location>
</feature>
<feature type="topological domain" description="Extracellular" evidence="5">
    <location>
        <begin position="56"/>
        <end position="64"/>
    </location>
</feature>
<feature type="transmembrane region" description="Helical" evidence="2">
    <location>
        <begin position="65"/>
        <end position="85"/>
    </location>
</feature>
<feature type="topological domain" description="Cytoplasmic" evidence="5">
    <location>
        <begin position="86"/>
        <end position="92"/>
    </location>
</feature>
<feature type="transmembrane region" description="Helical" evidence="2">
    <location>
        <begin position="93"/>
        <end position="110"/>
    </location>
</feature>
<feature type="topological domain" description="Extracellular" evidence="1">
    <location>
        <begin position="111"/>
        <end position="113"/>
    </location>
</feature>
<feature type="transmembrane region" description="Helical" evidence="2">
    <location>
        <begin position="114"/>
        <end position="134"/>
    </location>
</feature>
<feature type="topological domain" description="Cytoplasmic" evidence="1">
    <location>
        <begin position="135"/>
        <end position="153"/>
    </location>
</feature>
<feature type="transmembrane region" description="Helical" evidence="2">
    <location>
        <begin position="154"/>
        <end position="174"/>
    </location>
</feature>
<feature type="topological domain" description="Extracellular" evidence="5">
    <location>
        <position position="175"/>
    </location>
</feature>
<feature type="transmembrane region" description="Helical" evidence="2">
    <location>
        <begin position="176"/>
        <end position="196"/>
    </location>
</feature>
<feature type="topological domain" description="Cytoplasmic" evidence="5">
    <location>
        <begin position="197"/>
        <end position="221"/>
    </location>
</feature>
<feature type="lipid moiety-binding region" description="S-palmitoyl cysteine" evidence="1">
    <location>
        <position position="217"/>
    </location>
</feature>
<feature type="lipid moiety-binding region" description="S-palmitoyl cysteine" evidence="1">
    <location>
        <position position="218"/>
    </location>
</feature>
<feature type="sequence variant" id="VAR_081291" description="In CFZS1; uncertain significance." evidence="4">
    <original>W</original>
    <variation>R</variation>
    <location>
        <position position="79"/>
    </location>
</feature>
<feature type="sequence variant" id="VAR_079262" description="In CFZS1; uncertain significance; supports cell fusion in a heterologous cell fusion assay in vitro; decreased localization at the plasma membrane; partially rescues of mymk knockout fish; primary myoblasts from a compound heterozygote associating T-91 and R-185 exhibit no difference in their capability to differentiate compared to control myoblasts, but show a significant difference in the fusion index, with a higher percentage of singly-nucleated relative to multinucleated cells in compound heterozygous compared to control myoblasts; dbSNP:rs137868995." evidence="3 4">
    <original>P</original>
    <variation>T</variation>
    <location>
        <position position="91"/>
    </location>
</feature>
<feature type="sequence variant" id="VAR_079263" description="In CFZS1; loss of localization at the plasma membrane; loss of cell fusion in a heterologous cell fusion assay in vitro; no rescue of mymk knockout fish; dbSNP:rs964335184." evidence="3">
    <original>G</original>
    <variation>S</variation>
    <location>
        <position position="100"/>
    </location>
</feature>
<feature type="sequence variant" id="VAR_079264" description="In CFZS1; decreased localization at the plasma membrane; reduced cell fusion in a heterologous cell fusion assay in vitro compared to wild-type; partially rescues of mymk knockout fish; dbSNP:rs1131692249." evidence="3">
    <original>I</original>
    <variation>T</variation>
    <location>
        <position position="154"/>
    </location>
</feature>
<feature type="sequence variant" id="VAR_079265" description="In CFZS1; loss of localization at the plasma membrane; loss of cell fusion in a heterologous cell fusion assay in vitro; no rescue of mymk knockout fish; primary myoblasts from a compound heterozygote associating T-91 and R-185 exhibit no difference in their capability to differentiate compared to control myoblasts, but show a significant difference in the fusion index, with a higher percentage of singly-nucleated relative to multinucleated cells in compound heterozygous compared to control myoblasts; dbSNP:rs1131692247." evidence="3">
    <original>C</original>
    <variation>R</variation>
    <location>
        <position position="185"/>
    </location>
</feature>
<keyword id="KW-1003">Cell membrane</keyword>
<keyword id="KW-0225">Disease variant</keyword>
<keyword id="KW-0333">Golgi apparatus</keyword>
<keyword id="KW-0449">Lipoprotein</keyword>
<keyword id="KW-0472">Membrane</keyword>
<keyword id="KW-0517">Myogenesis</keyword>
<keyword id="KW-0564">Palmitate</keyword>
<keyword id="KW-1185">Reference proteome</keyword>
<keyword id="KW-0812">Transmembrane</keyword>
<keyword id="KW-1133">Transmembrane helix</keyword>
<name>MYMK_HUMAN</name>
<comment type="function">
    <text evidence="1 3">Myoblast-specific protein that mediates myoblast fusion, an essential step for the formation of multi-nucleated muscle fibers (PubMed:28681861). Actively participates in the membrane fusion reaction by mediating the mixing of cell membrane lipids (hemifusion) upstream of MYMX. Acts independently of MYMX (By similarity). Involved in skeletal muscle regeneration in response to injury by mediating the fusion of satellite cells, a population of muscle stem cells, with injured myofibers (By similarity). Also involved in skeletal muscle hypertrophy, probably by mediating the fusion of satellite cells with myofibers (By similarity).</text>
</comment>
<comment type="subunit">
    <text evidence="1">Interacts with MYMX.</text>
</comment>
<comment type="subcellular location">
    <subcellularLocation>
        <location evidence="1">Cell membrane</location>
        <topology evidence="1">Multi-pass membrane protein</topology>
    </subcellularLocation>
    <subcellularLocation>
        <location evidence="1">Golgi apparatus membrane</location>
        <topology evidence="1">Multi-pass membrane protein</topology>
    </subcellularLocation>
    <text evidence="1">Localizes on the plasma membrane of myoblasts, where it mediates myoblasts fusion. Also localizes in the Golgi apparatus and post-Golgi following palmitoylation; the role of Golgi localization is unclear.</text>
</comment>
<comment type="PTM">
    <text evidence="1">Palmitoylated at the C-terminus; palmitoylation promotes localization to the Golgi apparatus.</text>
</comment>
<comment type="disease" evidence="3 4">
    <disease id="DI-05049">
        <name>Carey-Fineman-Ziter syndrome 1</name>
        <acronym>CFZS1</acronym>
        <description>An autosomal recessive multisystem disorder characterized by hypotonia, bilateral congenital facial palsy with impairment of ocular abduction (Moebius sequence), micrognathia, glossoptosis and high-arched or cleft palate (Pierre Robin complex), delayed motor milestones, and failure to thrive.</description>
        <dbReference type="MIM" id="254940"/>
    </disease>
    <text>The disease is caused by variants affecting the gene represented in this entry.</text>
</comment>
<comment type="similarity">
    <text evidence="5">Belongs to the TMEM8 family.</text>
</comment>
<accession>A6NI61</accession>
<reference key="1">
    <citation type="journal article" date="2004" name="Nature">
        <title>DNA sequence and analysis of human chromosome 9.</title>
        <authorList>
            <person name="Humphray S.J."/>
            <person name="Oliver K."/>
            <person name="Hunt A.R."/>
            <person name="Plumb R.W."/>
            <person name="Loveland J.E."/>
            <person name="Howe K.L."/>
            <person name="Andrews T.D."/>
            <person name="Searle S."/>
            <person name="Hunt S.E."/>
            <person name="Scott C.E."/>
            <person name="Jones M.C."/>
            <person name="Ainscough R."/>
            <person name="Almeida J.P."/>
            <person name="Ambrose K.D."/>
            <person name="Ashwell R.I.S."/>
            <person name="Babbage A.K."/>
            <person name="Babbage S."/>
            <person name="Bagguley C.L."/>
            <person name="Bailey J."/>
            <person name="Banerjee R."/>
            <person name="Barker D.J."/>
            <person name="Barlow K.F."/>
            <person name="Bates K."/>
            <person name="Beasley H."/>
            <person name="Beasley O."/>
            <person name="Bird C.P."/>
            <person name="Bray-Allen S."/>
            <person name="Brown A.J."/>
            <person name="Brown J.Y."/>
            <person name="Burford D."/>
            <person name="Burrill W."/>
            <person name="Burton J."/>
            <person name="Carder C."/>
            <person name="Carter N.P."/>
            <person name="Chapman J.C."/>
            <person name="Chen Y."/>
            <person name="Clarke G."/>
            <person name="Clark S.Y."/>
            <person name="Clee C.M."/>
            <person name="Clegg S."/>
            <person name="Collier R.E."/>
            <person name="Corby N."/>
            <person name="Crosier M."/>
            <person name="Cummings A.T."/>
            <person name="Davies J."/>
            <person name="Dhami P."/>
            <person name="Dunn M."/>
            <person name="Dutta I."/>
            <person name="Dyer L.W."/>
            <person name="Earthrowl M.E."/>
            <person name="Faulkner L."/>
            <person name="Fleming C.J."/>
            <person name="Frankish A."/>
            <person name="Frankland J.A."/>
            <person name="French L."/>
            <person name="Fricker D.G."/>
            <person name="Garner P."/>
            <person name="Garnett J."/>
            <person name="Ghori J."/>
            <person name="Gilbert J.G.R."/>
            <person name="Glison C."/>
            <person name="Grafham D.V."/>
            <person name="Gribble S."/>
            <person name="Griffiths C."/>
            <person name="Griffiths-Jones S."/>
            <person name="Grocock R."/>
            <person name="Guy J."/>
            <person name="Hall R.E."/>
            <person name="Hammond S."/>
            <person name="Harley J.L."/>
            <person name="Harrison E.S.I."/>
            <person name="Hart E.A."/>
            <person name="Heath P.D."/>
            <person name="Henderson C.D."/>
            <person name="Hopkins B.L."/>
            <person name="Howard P.J."/>
            <person name="Howden P.J."/>
            <person name="Huckle E."/>
            <person name="Johnson C."/>
            <person name="Johnson D."/>
            <person name="Joy A.A."/>
            <person name="Kay M."/>
            <person name="Keenan S."/>
            <person name="Kershaw J.K."/>
            <person name="Kimberley A.M."/>
            <person name="King A."/>
            <person name="Knights A."/>
            <person name="Laird G.K."/>
            <person name="Langford C."/>
            <person name="Lawlor S."/>
            <person name="Leongamornlert D.A."/>
            <person name="Leversha M."/>
            <person name="Lloyd C."/>
            <person name="Lloyd D.M."/>
            <person name="Lovell J."/>
            <person name="Martin S."/>
            <person name="Mashreghi-Mohammadi M."/>
            <person name="Matthews L."/>
            <person name="McLaren S."/>
            <person name="McLay K.E."/>
            <person name="McMurray A."/>
            <person name="Milne S."/>
            <person name="Nickerson T."/>
            <person name="Nisbett J."/>
            <person name="Nordsiek G."/>
            <person name="Pearce A.V."/>
            <person name="Peck A.I."/>
            <person name="Porter K.M."/>
            <person name="Pandian R."/>
            <person name="Pelan S."/>
            <person name="Phillimore B."/>
            <person name="Povey S."/>
            <person name="Ramsey Y."/>
            <person name="Rand V."/>
            <person name="Scharfe M."/>
            <person name="Sehra H.K."/>
            <person name="Shownkeen R."/>
            <person name="Sims S.K."/>
            <person name="Skuce C.D."/>
            <person name="Smith M."/>
            <person name="Steward C.A."/>
            <person name="Swarbreck D."/>
            <person name="Sycamore N."/>
            <person name="Tester J."/>
            <person name="Thorpe A."/>
            <person name="Tracey A."/>
            <person name="Tromans A."/>
            <person name="Thomas D.W."/>
            <person name="Wall M."/>
            <person name="Wallis J.M."/>
            <person name="West A.P."/>
            <person name="Whitehead S.L."/>
            <person name="Willey D.L."/>
            <person name="Williams S.A."/>
            <person name="Wilming L."/>
            <person name="Wray P.W."/>
            <person name="Young L."/>
            <person name="Ashurst J.L."/>
            <person name="Coulson A."/>
            <person name="Blocker H."/>
            <person name="Durbin R.M."/>
            <person name="Sulston J.E."/>
            <person name="Hubbard T."/>
            <person name="Jackson M.J."/>
            <person name="Bentley D.R."/>
            <person name="Beck S."/>
            <person name="Rogers J."/>
            <person name="Dunham I."/>
        </authorList>
    </citation>
    <scope>NUCLEOTIDE SEQUENCE [LARGE SCALE GENOMIC DNA]</scope>
</reference>
<reference key="2">
    <citation type="journal article" date="2017" name="Nat. Commun.">
        <title>A defect in myoblast fusion underlies Carey-Fineman-Ziter syndrome.</title>
        <authorList>
            <consortium name="Moebius Syndrome Research Consortium"/>
            <person name="Di Gioia S.A."/>
            <person name="Connors S."/>
            <person name="Matsunami N."/>
            <person name="Cannavino J."/>
            <person name="Rose M.F."/>
            <person name="Gilette N.M."/>
            <person name="Artoni P."/>
            <person name="de Macena Sobreira N.L."/>
            <person name="Chan W.M."/>
            <person name="Webb B.D."/>
            <person name="Robson C.D."/>
            <person name="Cheng L."/>
            <person name="Van Ryzin C."/>
            <person name="Ramirez-Martinez A."/>
            <person name="Mohassel P."/>
            <person name="Leppert M."/>
            <person name="Scholand M.B."/>
            <person name="Grunseich C."/>
            <person name="Ferreira C.R."/>
            <person name="Hartman T."/>
            <person name="Hayes I.M."/>
            <person name="Morgan T."/>
            <person name="Markie D.M."/>
            <person name="Fagiolini M."/>
            <person name="Swift A."/>
            <person name="Chines P.S."/>
            <person name="Speck-Martins C.E."/>
            <person name="Collins F.S."/>
            <person name="Jabs E.W."/>
            <person name="Boennemann C.G."/>
            <person name="Olson E.N."/>
            <person name="Carey J.C."/>
            <person name="Robertson S.P."/>
            <person name="Manoli I."/>
            <person name="Engle E.C."/>
        </authorList>
    </citation>
    <scope>VARIANTS CFZS1 THR-91; SER-100; THR-154 AND ARG-185</scope>
    <scope>FUNCTION</scope>
    <scope>SUBCELLULAR LOCATION</scope>
</reference>
<reference key="3">
    <citation type="journal article" date="2018" name="Neurol. Genet.">
        <title>Carey-Fineman-Ziter syndrome with mutations in the myomaker gene and muscle fiber hypertrophy.</title>
        <authorList>
            <person name="Hedberg-Oldfors C."/>
            <person name="Lindberg C."/>
            <person name="Oldfors A."/>
        </authorList>
    </citation>
    <scope>VARIANTS CFZS1 ARG-79 AND THR-91</scope>
</reference>
<proteinExistence type="evidence at protein level"/>
<sequence length="221" mass="24699">MGTLVAKLLLPTLSSLAFLPTVSIAAKRRFHMEAMVYLFTLFFVALHHACNGPGLSVLCFMRHDILEYFSVYGTALSMWVSLMALADFDEPKRSTFVMFGVLTIAVRIYHDRWGYGVYSGPIGTAILIIAAKWLQKMKEKKGLYPDKSVYTQQIGPGLCFGALALMLRFFFEDWDYTYVHSFYHCALAMSFVLLLPKVNKKAGSPGTPAKLDCSTLCCACV</sequence>
<protein>
    <recommendedName>
        <fullName evidence="1">Protein myomaker</fullName>
    </recommendedName>
    <alternativeName>
        <fullName evidence="1">Myoblast fusion maker</fullName>
    </alternativeName>
    <alternativeName>
        <fullName>Transmembrane protein 226</fullName>
    </alternativeName>
    <alternativeName>
        <fullName>Transmembrane protein 8C</fullName>
    </alternativeName>
</protein>
<evidence type="ECO:0000250" key="1">
    <source>
        <dbReference type="UniProtKB" id="Q9D1N4"/>
    </source>
</evidence>
<evidence type="ECO:0000255" key="2"/>
<evidence type="ECO:0000269" key="3">
    <source>
    </source>
</evidence>
<evidence type="ECO:0000269" key="4">
    <source>
    </source>
</evidence>
<evidence type="ECO:0000305" key="5"/>
<evidence type="ECO:0000312" key="6">
    <source>
        <dbReference type="HGNC" id="HGNC:33778"/>
    </source>
</evidence>
<organism>
    <name type="scientific">Homo sapiens</name>
    <name type="common">Human</name>
    <dbReference type="NCBI Taxonomy" id="9606"/>
    <lineage>
        <taxon>Eukaryota</taxon>
        <taxon>Metazoa</taxon>
        <taxon>Chordata</taxon>
        <taxon>Craniata</taxon>
        <taxon>Vertebrata</taxon>
        <taxon>Euteleostomi</taxon>
        <taxon>Mammalia</taxon>
        <taxon>Eutheria</taxon>
        <taxon>Euarchontoglires</taxon>
        <taxon>Primates</taxon>
        <taxon>Haplorrhini</taxon>
        <taxon>Catarrhini</taxon>
        <taxon>Hominidae</taxon>
        <taxon>Homo</taxon>
    </lineage>
</organism>